<reference key="1">
    <citation type="journal article" date="2002" name="Science">
        <title>50 million years of genomic stasis in endosymbiotic bacteria.</title>
        <authorList>
            <person name="Tamas I."/>
            <person name="Klasson L."/>
            <person name="Canbaeck B."/>
            <person name="Naeslund A.K."/>
            <person name="Eriksson A.-S."/>
            <person name="Wernegreen J.J."/>
            <person name="Sandstroem J.P."/>
            <person name="Moran N.A."/>
            <person name="Andersson S.G.E."/>
        </authorList>
    </citation>
    <scope>NUCLEOTIDE SEQUENCE [LARGE SCALE GENOMIC DNA]</scope>
    <source>
        <strain>Sg</strain>
    </source>
</reference>
<comment type="function">
    <text evidence="1">Plays an important role in DNA replication, recombination and repair. Binds to ssDNA and to an array of partner proteins to recruit them to their sites of action during DNA metabolism.</text>
</comment>
<comment type="subunit">
    <text evidence="1">Homotetramer.</text>
</comment>
<organism>
    <name type="scientific">Buchnera aphidicola subsp. Schizaphis graminum (strain Sg)</name>
    <dbReference type="NCBI Taxonomy" id="198804"/>
    <lineage>
        <taxon>Bacteria</taxon>
        <taxon>Pseudomonadati</taxon>
        <taxon>Pseudomonadota</taxon>
        <taxon>Gammaproteobacteria</taxon>
        <taxon>Enterobacterales</taxon>
        <taxon>Erwiniaceae</taxon>
        <taxon>Buchnera</taxon>
    </lineage>
</organism>
<gene>
    <name type="primary">ssb</name>
    <name type="ordered locus">BUsg_527</name>
</gene>
<evidence type="ECO:0000255" key="1">
    <source>
        <dbReference type="HAMAP-Rule" id="MF_00984"/>
    </source>
</evidence>
<proteinExistence type="inferred from homology"/>
<protein>
    <recommendedName>
        <fullName evidence="1">Single-stranded DNA-binding protein</fullName>
        <shortName evidence="1">SSB</shortName>
    </recommendedName>
</protein>
<feature type="chain" id="PRO_0000096018" description="Single-stranded DNA-binding protein">
    <location>
        <begin position="1"/>
        <end position="162"/>
    </location>
</feature>
<feature type="domain" description="SSB" evidence="1">
    <location>
        <begin position="6"/>
        <end position="111"/>
    </location>
</feature>
<feature type="DNA-binding region" evidence="1">
    <location>
        <begin position="55"/>
        <end position="61"/>
    </location>
</feature>
<feature type="short sequence motif" description="Important for interaction with partner proteins" evidence="1">
    <location>
        <begin position="157"/>
        <end position="162"/>
    </location>
</feature>
<sequence length="162" mass="18392">MASRGVNKVILIGHLGQDPEVRYMPNGNAVVNMTLATSENWKDKNTGENKEKTEWHRIVLFGKLAEIAGEYLRKGSQVYIEGSLQTRKWQDQNGLERYTTEVIVNIGGTMQMLGNRNSNSHNVTLNENNNIVKTKKIEINNSPKKIEKIDSSEIDFDDEIPF</sequence>
<accession>Q8K933</accession>
<dbReference type="EMBL" id="AE013218">
    <property type="protein sequence ID" value="AAM68068.1"/>
    <property type="molecule type" value="Genomic_DNA"/>
</dbReference>
<dbReference type="RefSeq" id="WP_044006063.1">
    <property type="nucleotide sequence ID" value="NC_004061.1"/>
</dbReference>
<dbReference type="SMR" id="Q8K933"/>
<dbReference type="STRING" id="198804.BUsg_527"/>
<dbReference type="GeneID" id="93004002"/>
<dbReference type="KEGG" id="bas:BUsg_527"/>
<dbReference type="eggNOG" id="COG0629">
    <property type="taxonomic scope" value="Bacteria"/>
</dbReference>
<dbReference type="HOGENOM" id="CLU_078758_0_2_6"/>
<dbReference type="Proteomes" id="UP000000416">
    <property type="component" value="Chromosome"/>
</dbReference>
<dbReference type="GO" id="GO:0009295">
    <property type="term" value="C:nucleoid"/>
    <property type="evidence" value="ECO:0007669"/>
    <property type="project" value="TreeGrafter"/>
</dbReference>
<dbReference type="GO" id="GO:0003697">
    <property type="term" value="F:single-stranded DNA binding"/>
    <property type="evidence" value="ECO:0007669"/>
    <property type="project" value="UniProtKB-UniRule"/>
</dbReference>
<dbReference type="GO" id="GO:0006310">
    <property type="term" value="P:DNA recombination"/>
    <property type="evidence" value="ECO:0007669"/>
    <property type="project" value="UniProtKB-UniRule"/>
</dbReference>
<dbReference type="GO" id="GO:0006281">
    <property type="term" value="P:DNA repair"/>
    <property type="evidence" value="ECO:0007669"/>
    <property type="project" value="UniProtKB-UniRule"/>
</dbReference>
<dbReference type="GO" id="GO:0006260">
    <property type="term" value="P:DNA replication"/>
    <property type="evidence" value="ECO:0007669"/>
    <property type="project" value="UniProtKB-UniRule"/>
</dbReference>
<dbReference type="CDD" id="cd04496">
    <property type="entry name" value="SSB_OBF"/>
    <property type="match status" value="1"/>
</dbReference>
<dbReference type="Gene3D" id="2.40.50.140">
    <property type="entry name" value="Nucleic acid-binding proteins"/>
    <property type="match status" value="1"/>
</dbReference>
<dbReference type="HAMAP" id="MF_00984">
    <property type="entry name" value="SSB"/>
    <property type="match status" value="1"/>
</dbReference>
<dbReference type="InterPro" id="IPR012340">
    <property type="entry name" value="NA-bd_OB-fold"/>
</dbReference>
<dbReference type="InterPro" id="IPR000424">
    <property type="entry name" value="Primosome_PriB/ssb"/>
</dbReference>
<dbReference type="InterPro" id="IPR011344">
    <property type="entry name" value="ssDNA-bd"/>
</dbReference>
<dbReference type="NCBIfam" id="TIGR00621">
    <property type="entry name" value="ssb"/>
    <property type="match status" value="1"/>
</dbReference>
<dbReference type="PANTHER" id="PTHR10302">
    <property type="entry name" value="SINGLE-STRANDED DNA-BINDING PROTEIN"/>
    <property type="match status" value="1"/>
</dbReference>
<dbReference type="PANTHER" id="PTHR10302:SF27">
    <property type="entry name" value="SINGLE-STRANDED DNA-BINDING PROTEIN"/>
    <property type="match status" value="1"/>
</dbReference>
<dbReference type="Pfam" id="PF00436">
    <property type="entry name" value="SSB"/>
    <property type="match status" value="1"/>
</dbReference>
<dbReference type="PIRSF" id="PIRSF002070">
    <property type="entry name" value="SSB"/>
    <property type="match status" value="1"/>
</dbReference>
<dbReference type="SUPFAM" id="SSF50249">
    <property type="entry name" value="Nucleic acid-binding proteins"/>
    <property type="match status" value="1"/>
</dbReference>
<dbReference type="PROSITE" id="PS50935">
    <property type="entry name" value="SSB"/>
    <property type="match status" value="1"/>
</dbReference>
<keyword id="KW-0227">DNA damage</keyword>
<keyword id="KW-0233">DNA recombination</keyword>
<keyword id="KW-0234">DNA repair</keyword>
<keyword id="KW-0235">DNA replication</keyword>
<keyword id="KW-0238">DNA-binding</keyword>
<name>SSB_BUCAP</name>